<evidence type="ECO:0000255" key="1">
    <source>
        <dbReference type="HAMAP-Rule" id="MF_01270"/>
    </source>
</evidence>
<dbReference type="EC" id="2.7.1.170" evidence="1"/>
<dbReference type="EMBL" id="AM747720">
    <property type="protein sequence ID" value="CAR53668.1"/>
    <property type="molecule type" value="Genomic_DNA"/>
</dbReference>
<dbReference type="RefSeq" id="WP_006483425.1">
    <property type="nucleotide sequence ID" value="NC_011000.1"/>
</dbReference>
<dbReference type="SMR" id="B4EET3"/>
<dbReference type="KEGG" id="bcj:BCAL3345"/>
<dbReference type="eggNOG" id="COG2377">
    <property type="taxonomic scope" value="Bacteria"/>
</dbReference>
<dbReference type="HOGENOM" id="CLU_038782_0_0_4"/>
<dbReference type="BioCyc" id="BCEN216591:G1G1V-3721-MONOMER"/>
<dbReference type="UniPathway" id="UPA00343"/>
<dbReference type="UniPathway" id="UPA00544"/>
<dbReference type="Proteomes" id="UP000001035">
    <property type="component" value="Chromosome 1"/>
</dbReference>
<dbReference type="GO" id="GO:0005524">
    <property type="term" value="F:ATP binding"/>
    <property type="evidence" value="ECO:0007669"/>
    <property type="project" value="UniProtKB-UniRule"/>
</dbReference>
<dbReference type="GO" id="GO:0016301">
    <property type="term" value="F:kinase activity"/>
    <property type="evidence" value="ECO:0007669"/>
    <property type="project" value="UniProtKB-KW"/>
</dbReference>
<dbReference type="GO" id="GO:0016773">
    <property type="term" value="F:phosphotransferase activity, alcohol group as acceptor"/>
    <property type="evidence" value="ECO:0007669"/>
    <property type="project" value="UniProtKB-UniRule"/>
</dbReference>
<dbReference type="GO" id="GO:0097175">
    <property type="term" value="P:1,6-anhydro-N-acetyl-beta-muramic acid catabolic process"/>
    <property type="evidence" value="ECO:0007669"/>
    <property type="project" value="UniProtKB-UniRule"/>
</dbReference>
<dbReference type="GO" id="GO:0006040">
    <property type="term" value="P:amino sugar metabolic process"/>
    <property type="evidence" value="ECO:0007669"/>
    <property type="project" value="InterPro"/>
</dbReference>
<dbReference type="GO" id="GO:0009254">
    <property type="term" value="P:peptidoglycan turnover"/>
    <property type="evidence" value="ECO:0007669"/>
    <property type="project" value="UniProtKB-UniRule"/>
</dbReference>
<dbReference type="CDD" id="cd24050">
    <property type="entry name" value="ASKHA_NBD_ANMK"/>
    <property type="match status" value="1"/>
</dbReference>
<dbReference type="Gene3D" id="3.30.420.40">
    <property type="match status" value="2"/>
</dbReference>
<dbReference type="HAMAP" id="MF_01270">
    <property type="entry name" value="AnhMurNAc_kinase"/>
    <property type="match status" value="1"/>
</dbReference>
<dbReference type="InterPro" id="IPR005338">
    <property type="entry name" value="Anhydro_N_Ac-Mur_kinase"/>
</dbReference>
<dbReference type="InterPro" id="IPR043129">
    <property type="entry name" value="ATPase_NBD"/>
</dbReference>
<dbReference type="NCBIfam" id="NF007139">
    <property type="entry name" value="PRK09585.1-3"/>
    <property type="match status" value="1"/>
</dbReference>
<dbReference type="NCBIfam" id="NF007140">
    <property type="entry name" value="PRK09585.1-4"/>
    <property type="match status" value="1"/>
</dbReference>
<dbReference type="PANTHER" id="PTHR30605">
    <property type="entry name" value="ANHYDRO-N-ACETYLMURAMIC ACID KINASE"/>
    <property type="match status" value="1"/>
</dbReference>
<dbReference type="PANTHER" id="PTHR30605:SF0">
    <property type="entry name" value="ANHYDRO-N-ACETYLMURAMIC ACID KINASE"/>
    <property type="match status" value="1"/>
</dbReference>
<dbReference type="Pfam" id="PF03702">
    <property type="entry name" value="AnmK"/>
    <property type="match status" value="1"/>
</dbReference>
<dbReference type="SUPFAM" id="SSF53067">
    <property type="entry name" value="Actin-like ATPase domain"/>
    <property type="match status" value="1"/>
</dbReference>
<reference key="1">
    <citation type="journal article" date="2009" name="J. Bacteriol.">
        <title>The genome of Burkholderia cenocepacia J2315, an epidemic pathogen of cystic fibrosis patients.</title>
        <authorList>
            <person name="Holden M.T."/>
            <person name="Seth-Smith H.M."/>
            <person name="Crossman L.C."/>
            <person name="Sebaihia M."/>
            <person name="Bentley S.D."/>
            <person name="Cerdeno-Tarraga A.M."/>
            <person name="Thomson N.R."/>
            <person name="Bason N."/>
            <person name="Quail M.A."/>
            <person name="Sharp S."/>
            <person name="Cherevach I."/>
            <person name="Churcher C."/>
            <person name="Goodhead I."/>
            <person name="Hauser H."/>
            <person name="Holroyd N."/>
            <person name="Mungall K."/>
            <person name="Scott P."/>
            <person name="Walker D."/>
            <person name="White B."/>
            <person name="Rose H."/>
            <person name="Iversen P."/>
            <person name="Mil-Homens D."/>
            <person name="Rocha E.P."/>
            <person name="Fialho A.M."/>
            <person name="Baldwin A."/>
            <person name="Dowson C."/>
            <person name="Barrell B.G."/>
            <person name="Govan J.R."/>
            <person name="Vandamme P."/>
            <person name="Hart C.A."/>
            <person name="Mahenthiralingam E."/>
            <person name="Parkhill J."/>
        </authorList>
    </citation>
    <scope>NUCLEOTIDE SEQUENCE [LARGE SCALE GENOMIC DNA]</scope>
    <source>
        <strain>ATCC BAA-245 / DSM 16553 / LMG 16656 / NCTC 13227 / J2315 / CF5610</strain>
    </source>
</reference>
<gene>
    <name evidence="1" type="primary">anmK</name>
    <name type="ordered locus">BceJ2315_32840</name>
    <name type="ORF">BCAL3345</name>
</gene>
<keyword id="KW-0067">ATP-binding</keyword>
<keyword id="KW-0119">Carbohydrate metabolism</keyword>
<keyword id="KW-0418">Kinase</keyword>
<keyword id="KW-0547">Nucleotide-binding</keyword>
<keyword id="KW-0808">Transferase</keyword>
<organism>
    <name type="scientific">Burkholderia cenocepacia (strain ATCC BAA-245 / DSM 16553 / LMG 16656 / NCTC 13227 / J2315 / CF5610)</name>
    <name type="common">Burkholderia cepacia (strain J2315)</name>
    <dbReference type="NCBI Taxonomy" id="216591"/>
    <lineage>
        <taxon>Bacteria</taxon>
        <taxon>Pseudomonadati</taxon>
        <taxon>Pseudomonadota</taxon>
        <taxon>Betaproteobacteria</taxon>
        <taxon>Burkholderiales</taxon>
        <taxon>Burkholderiaceae</taxon>
        <taxon>Burkholderia</taxon>
        <taxon>Burkholderia cepacia complex</taxon>
    </lineage>
</organism>
<accession>B4EET3</accession>
<proteinExistence type="inferred from homology"/>
<protein>
    <recommendedName>
        <fullName evidence="1">Anhydro-N-acetylmuramic acid kinase</fullName>
        <ecNumber evidence="1">2.7.1.170</ecNumber>
    </recommendedName>
    <alternativeName>
        <fullName evidence="1">AnhMurNAc kinase</fullName>
    </alternativeName>
</protein>
<sequence>MPQRQPQPAHPADGIYFGLMSGTSMDGVDGVAVRFEAGRAPVVLAEAFVGFAQSLRDALFALQQPGDNEIDRESLAANALVTRYAVCCHELQRTAGLSRDEIRAIGVHGQTVRHRPERGYTRQLNNPALLAELTQVDVIADFRSRDVAAGGHGAPLAPAFHATVFGAPGETRVVCNLGGISNITILPGAGGDVRGFDCGPANALIDAWATRHLGKPYDDGGKFAARGTVHAALLAALLDEPYFTAPPPKSTGRDLFNPAWLDAKLAAFSQVAPEDVQATLTALTAVSVAREVAQHAPGCKAVFVCGGGARNPVLLDALRHALREAGVPATVDTTAALGVPPQQVEALAFAWLAYRFTARQPGNLATVTGAAGNRVLGALYPR</sequence>
<name>ANMK_BURCJ</name>
<feature type="chain" id="PRO_1000165156" description="Anhydro-N-acetylmuramic acid kinase">
    <location>
        <begin position="1"/>
        <end position="382"/>
    </location>
</feature>
<feature type="binding site" evidence="1">
    <location>
        <begin position="22"/>
        <end position="29"/>
    </location>
    <ligand>
        <name>ATP</name>
        <dbReference type="ChEBI" id="CHEBI:30616"/>
    </ligand>
</feature>
<comment type="function">
    <text evidence="1">Catalyzes the specific phosphorylation of 1,6-anhydro-N-acetylmuramic acid (anhMurNAc) with the simultaneous cleavage of the 1,6-anhydro ring, generating MurNAc-6-P. Is required for the utilization of anhMurNAc either imported from the medium or derived from its own cell wall murein, and thus plays a role in cell wall recycling.</text>
</comment>
<comment type="catalytic activity">
    <reaction evidence="1">
        <text>1,6-anhydro-N-acetyl-beta-muramate + ATP + H2O = N-acetyl-D-muramate 6-phosphate + ADP + H(+)</text>
        <dbReference type="Rhea" id="RHEA:24952"/>
        <dbReference type="ChEBI" id="CHEBI:15377"/>
        <dbReference type="ChEBI" id="CHEBI:15378"/>
        <dbReference type="ChEBI" id="CHEBI:30616"/>
        <dbReference type="ChEBI" id="CHEBI:58690"/>
        <dbReference type="ChEBI" id="CHEBI:58722"/>
        <dbReference type="ChEBI" id="CHEBI:456216"/>
        <dbReference type="EC" id="2.7.1.170"/>
    </reaction>
</comment>
<comment type="pathway">
    <text evidence="1">Amino-sugar metabolism; 1,6-anhydro-N-acetylmuramate degradation.</text>
</comment>
<comment type="pathway">
    <text evidence="1">Cell wall biogenesis; peptidoglycan recycling.</text>
</comment>
<comment type="similarity">
    <text evidence="1">Belongs to the anhydro-N-acetylmuramic acid kinase family.</text>
</comment>